<proteinExistence type="inferred from homology"/>
<feature type="chain" id="PRO_1000082646" description="UPF0235 protein RrIowa_1526">
    <location>
        <begin position="1"/>
        <end position="105"/>
    </location>
</feature>
<accession>B0BVI5</accession>
<sequence length="105" mass="12166">MDKFYNYNSSSHQALLSFKVKPNSKQNLISNFVIINNIQYLKLSIKAIPEQGKANAEIINYLAKEWKLSRSNIEIIKGHTHSLKTILIKNINEDYLNLIINSYIK</sequence>
<reference key="1">
    <citation type="journal article" date="2008" name="Infect. Immun.">
        <title>Genomic comparison of virulent Rickettsia rickettsii Sheila Smith and avirulent Rickettsia rickettsii Iowa.</title>
        <authorList>
            <person name="Ellison D.W."/>
            <person name="Clark T.R."/>
            <person name="Sturdevant D.E."/>
            <person name="Virtaneva K."/>
            <person name="Porcella S.F."/>
            <person name="Hackstadt T."/>
        </authorList>
    </citation>
    <scope>NUCLEOTIDE SEQUENCE [LARGE SCALE GENOMIC DNA]</scope>
    <source>
        <strain>Iowa</strain>
    </source>
</reference>
<protein>
    <recommendedName>
        <fullName evidence="1">UPF0235 protein RrIowa_1526</fullName>
    </recommendedName>
</protein>
<name>Y1526_RICRO</name>
<evidence type="ECO:0000255" key="1">
    <source>
        <dbReference type="HAMAP-Rule" id="MF_00634"/>
    </source>
</evidence>
<organism>
    <name type="scientific">Rickettsia rickettsii (strain Iowa)</name>
    <dbReference type="NCBI Taxonomy" id="452659"/>
    <lineage>
        <taxon>Bacteria</taxon>
        <taxon>Pseudomonadati</taxon>
        <taxon>Pseudomonadota</taxon>
        <taxon>Alphaproteobacteria</taxon>
        <taxon>Rickettsiales</taxon>
        <taxon>Rickettsiaceae</taxon>
        <taxon>Rickettsieae</taxon>
        <taxon>Rickettsia</taxon>
        <taxon>spotted fever group</taxon>
    </lineage>
</organism>
<dbReference type="EMBL" id="CP000766">
    <property type="protein sequence ID" value="ABY73245.1"/>
    <property type="molecule type" value="Genomic_DNA"/>
</dbReference>
<dbReference type="RefSeq" id="WP_012262629.1">
    <property type="nucleotide sequence ID" value="NC_010263.3"/>
</dbReference>
<dbReference type="SMR" id="B0BVI5"/>
<dbReference type="KEGG" id="rrj:RrIowa_1526"/>
<dbReference type="eggNOG" id="COG1872">
    <property type="taxonomic scope" value="Bacteria"/>
</dbReference>
<dbReference type="HOGENOM" id="CLU_130694_6_2_5"/>
<dbReference type="Proteomes" id="UP000000796">
    <property type="component" value="Chromosome"/>
</dbReference>
<dbReference type="GO" id="GO:0005737">
    <property type="term" value="C:cytoplasm"/>
    <property type="evidence" value="ECO:0007669"/>
    <property type="project" value="TreeGrafter"/>
</dbReference>
<dbReference type="Gene3D" id="3.30.1200.10">
    <property type="entry name" value="YggU-like"/>
    <property type="match status" value="1"/>
</dbReference>
<dbReference type="HAMAP" id="MF_00634">
    <property type="entry name" value="UPF0235"/>
    <property type="match status" value="1"/>
</dbReference>
<dbReference type="InterPro" id="IPR003746">
    <property type="entry name" value="DUF167"/>
</dbReference>
<dbReference type="InterPro" id="IPR036591">
    <property type="entry name" value="YggU-like_sf"/>
</dbReference>
<dbReference type="NCBIfam" id="TIGR00251">
    <property type="entry name" value="DUF167 family protein"/>
    <property type="match status" value="1"/>
</dbReference>
<dbReference type="NCBIfam" id="NF002419">
    <property type="entry name" value="PRK01530.1"/>
    <property type="match status" value="1"/>
</dbReference>
<dbReference type="PANTHER" id="PTHR13420">
    <property type="entry name" value="UPF0235 PROTEIN C15ORF40"/>
    <property type="match status" value="1"/>
</dbReference>
<dbReference type="PANTHER" id="PTHR13420:SF7">
    <property type="entry name" value="UPF0235 PROTEIN C15ORF40"/>
    <property type="match status" value="1"/>
</dbReference>
<dbReference type="Pfam" id="PF02594">
    <property type="entry name" value="DUF167"/>
    <property type="match status" value="1"/>
</dbReference>
<dbReference type="SMART" id="SM01152">
    <property type="entry name" value="DUF167"/>
    <property type="match status" value="1"/>
</dbReference>
<dbReference type="SUPFAM" id="SSF69786">
    <property type="entry name" value="YggU-like"/>
    <property type="match status" value="1"/>
</dbReference>
<comment type="similarity">
    <text evidence="1">Belongs to the UPF0235 family.</text>
</comment>
<gene>
    <name type="ordered locus">RrIowa_1526</name>
</gene>